<protein>
    <recommendedName>
        <fullName evidence="6">FAD-dependent monooxygenase idtM</fullName>
        <ecNumber evidence="9">1.-.-.-</ecNumber>
    </recommendedName>
    <alternativeName>
        <fullName evidence="6">Indole-diterpene biosynthesis cluster protein M</fullName>
    </alternativeName>
</protein>
<accession>J7FK10</accession>
<feature type="chain" id="PRO_0000451436" description="FAD-dependent monooxygenase idtM">
    <location>
        <begin position="1"/>
        <end position="491"/>
    </location>
</feature>
<feature type="transmembrane region" description="Helical" evidence="2">
    <location>
        <begin position="448"/>
        <end position="468"/>
    </location>
</feature>
<feature type="binding site" evidence="1">
    <location>
        <position position="34"/>
    </location>
    <ligand>
        <name>FAD</name>
        <dbReference type="ChEBI" id="CHEBI:57692"/>
    </ligand>
</feature>
<feature type="binding site" evidence="1">
    <location>
        <position position="48"/>
    </location>
    <ligand>
        <name>FAD</name>
        <dbReference type="ChEBI" id="CHEBI:57692"/>
    </ligand>
</feature>
<feature type="binding site" evidence="1">
    <location>
        <position position="107"/>
    </location>
    <ligand>
        <name>FAD</name>
        <dbReference type="ChEBI" id="CHEBI:57692"/>
    </ligand>
</feature>
<feature type="binding site" evidence="1">
    <location>
        <position position="307"/>
    </location>
    <ligand>
        <name>FAD</name>
        <dbReference type="ChEBI" id="CHEBI:57692"/>
    </ligand>
</feature>
<feature type="binding site" evidence="1">
    <location>
        <position position="320"/>
    </location>
    <ligand>
        <name>FAD</name>
        <dbReference type="ChEBI" id="CHEBI:57692"/>
    </ligand>
</feature>
<sequence>MADDFKVVIVGGSVAGLSLAHCLERLGVSYVVLEKGSQIAPQLGASIGILPNGGRILDQLGIFRDVEDEIEPLNFAVIRYADGFSFRSQYPKALHSSYGYPVSFLERQKFIQILYDKLRGKNHVHTRKRVVSIVDGPGKALIRTDDGDEYDADMVVGADGVHSVVRSEIWRHAKEAAGTAVTEEEPNADIKYDYACVYGISVNVPHADTGVQLSSLSDGVSIHLFAGKGSKFFWFIMVRTSRDEFLELKKDSAHMARRTCEGLGSKRLSDAVYFRDVWSRCTVYQMTPLEEGVFRQWNRGRLVCIGDAIRKMAPNIGQGANMAIEDAAQLSNLIREMLASPRKASATTVEKMLRDFAAMQKARTKSMCGQSEFLVRMHANEGFGRRLLGRYLIPSLQDAPAGLAGLSIRGAVKLECAGVPSRTLGKAWEGSWGSSLRNLMYLRPRLGILSLVYVVAGLAMMYMSIYLVVPARLAAQAFDVSRDGTEGKGGG</sequence>
<proteinExistence type="inferred from homology"/>
<organism>
    <name type="scientific">Claviceps paspali</name>
    <name type="common">Rye ergot fungus</name>
    <dbReference type="NCBI Taxonomy" id="40601"/>
    <lineage>
        <taxon>Eukaryota</taxon>
        <taxon>Fungi</taxon>
        <taxon>Dikarya</taxon>
        <taxon>Ascomycota</taxon>
        <taxon>Pezizomycotina</taxon>
        <taxon>Sordariomycetes</taxon>
        <taxon>Hypocreomycetidae</taxon>
        <taxon>Hypocreales</taxon>
        <taxon>Clavicipitaceae</taxon>
        <taxon>Claviceps</taxon>
    </lineage>
</organism>
<evidence type="ECO:0000250" key="1">
    <source>
        <dbReference type="UniProtKB" id="B8M9J8"/>
    </source>
</evidence>
<evidence type="ECO:0000255" key="2"/>
<evidence type="ECO:0000269" key="3">
    <source>
    </source>
</evidence>
<evidence type="ECO:0000269" key="4">
    <source>
    </source>
</evidence>
<evidence type="ECO:0000269" key="5">
    <source>
    </source>
</evidence>
<evidence type="ECO:0000303" key="6">
    <source>
    </source>
</evidence>
<evidence type="ECO:0000305" key="7"/>
<evidence type="ECO:0000305" key="8">
    <source>
    </source>
</evidence>
<evidence type="ECO:0000305" key="9">
    <source>
    </source>
</evidence>
<gene>
    <name evidence="6" type="primary">idtM</name>
</gene>
<name>IDTM_CLAPA</name>
<comment type="function">
    <text evidence="3 4 5 9">FAD-dependent monooxygenase; part of the gene cluster that mediates the biosynthesis of paspalitrems, indole-diterpene (IDT) mycotoxins that are potent tremorgens in mammals (PubMed:23468653, PubMed:29457197, PubMed:32077051). The geranylgeranyl diphosphate (GGPP) synthase idtG is proposed to catalyze the first step in IDT biosynthesis via catalysis of a series of iterative condensations of isopentenyl diphosphate (IPP) with dimethylallyl diphosphate (DMAPP), geranyl diphosphate (GPP), and farnesyl diphosphate (FPP), to form GGPP (Probable). Condensation of indole-3-glycerol phosphate with GGPP by the prenyltransferase idtC then forms 3-geranylgeranylindole (3-GGI) (Probable). Epoxidation of the two terminal alkenes of the geranylgeranyl moiety by the FAD-dependent monooxygenase idtM, and cyclization by the terpene cyclase idtB then leads to the production of paspaline (Probable). The cytochrome P450 monooxygenase idtP then catalyzes oxidative elimination of the pendant methyl group at C-12 of paspaline and generates the C-10 ketone to yield 13-desoxypaxilline (PubMed:32077051). The cytochrome P450 monooxygenase idtQ may catalyze the C-13 oxidation of 13-desoxypaxilline to afford paxilline (Probable). Considering that both paspalicine and paxilline were detected in C.paspali, idtQ also catalyzes the formation of paspalinine from 13-desoxypaxilline via paspalicine as an intermediate (Probable). Finally, the alpha-prenyltransferase idtF prenylates paspalinine at the C-20 or the C-21 positions to yield paspalitrems A and C, respectively (PubMed:32077051). The hydroxylation of paspalitrem A at C-32 by a still unknown oxidase affords paspalitrem B (Probable).</text>
</comment>
<comment type="cofactor">
    <cofactor evidence="7">
        <name>FAD</name>
        <dbReference type="ChEBI" id="CHEBI:57692"/>
    </cofactor>
</comment>
<comment type="pathway">
    <text evidence="8">Secondary metabolite biosynthesis.</text>
</comment>
<comment type="subcellular location">
    <subcellularLocation>
        <location evidence="2">Membrane</location>
        <topology evidence="2">Single-pass membrane protein</topology>
    </subcellularLocation>
</comment>
<comment type="similarity">
    <text evidence="7">Belongs to the paxM FAD-dependent monooxygenase family.</text>
</comment>
<keyword id="KW-0274">FAD</keyword>
<keyword id="KW-0285">Flavoprotein</keyword>
<keyword id="KW-0472">Membrane</keyword>
<keyword id="KW-0503">Monooxygenase</keyword>
<keyword id="KW-0560">Oxidoreductase</keyword>
<keyword id="KW-0812">Transmembrane</keyword>
<keyword id="KW-1133">Transmembrane helix</keyword>
<dbReference type="EC" id="1.-.-.-" evidence="9"/>
<dbReference type="EMBL" id="JN613322">
    <property type="protein sequence ID" value="AFO85424.1"/>
    <property type="molecule type" value="Genomic_DNA"/>
</dbReference>
<dbReference type="SMR" id="J7FK10"/>
<dbReference type="GO" id="GO:0016020">
    <property type="term" value="C:membrane"/>
    <property type="evidence" value="ECO:0007669"/>
    <property type="project" value="UniProtKB-SubCell"/>
</dbReference>
<dbReference type="GO" id="GO:0071949">
    <property type="term" value="F:FAD binding"/>
    <property type="evidence" value="ECO:0007669"/>
    <property type="project" value="InterPro"/>
</dbReference>
<dbReference type="GO" id="GO:0004497">
    <property type="term" value="F:monooxygenase activity"/>
    <property type="evidence" value="ECO:0007669"/>
    <property type="project" value="UniProtKB-KW"/>
</dbReference>
<dbReference type="Gene3D" id="3.50.50.60">
    <property type="entry name" value="FAD/NAD(P)-binding domain"/>
    <property type="match status" value="1"/>
</dbReference>
<dbReference type="InterPro" id="IPR002938">
    <property type="entry name" value="FAD-bd"/>
</dbReference>
<dbReference type="InterPro" id="IPR036188">
    <property type="entry name" value="FAD/NAD-bd_sf"/>
</dbReference>
<dbReference type="InterPro" id="IPR050562">
    <property type="entry name" value="FAD_mOase_fung"/>
</dbReference>
<dbReference type="PANTHER" id="PTHR47356:SF2">
    <property type="entry name" value="FAD-BINDING DOMAIN-CONTAINING PROTEIN-RELATED"/>
    <property type="match status" value="1"/>
</dbReference>
<dbReference type="PANTHER" id="PTHR47356">
    <property type="entry name" value="FAD-DEPENDENT MONOOXYGENASE ASQG-RELATED"/>
    <property type="match status" value="1"/>
</dbReference>
<dbReference type="Pfam" id="PF01494">
    <property type="entry name" value="FAD_binding_3"/>
    <property type="match status" value="1"/>
</dbReference>
<dbReference type="PRINTS" id="PR00420">
    <property type="entry name" value="RNGMNOXGNASE"/>
</dbReference>
<dbReference type="SUPFAM" id="SSF51905">
    <property type="entry name" value="FAD/NAD(P)-binding domain"/>
    <property type="match status" value="1"/>
</dbReference>
<reference key="1">
    <citation type="journal article" date="2013" name="PLoS Genet.">
        <title>Plant-symbiotic fungi as chemical engineers: Multi-genome analysis of the Clavicipitaceae reveals dynamics of alkaloid loci.</title>
        <authorList>
            <person name="Schardl C.L."/>
            <person name="Young C.A."/>
            <person name="Hesse U."/>
            <person name="Amyotte S.G."/>
            <person name="Andreeva K."/>
            <person name="Calie P.J."/>
            <person name="Fleetwood D.J."/>
            <person name="Haws D.C."/>
            <person name="Moore N."/>
            <person name="Oeser B."/>
            <person name="Panaccione D.G."/>
            <person name="Schweri K.K."/>
            <person name="Voisey C.R."/>
            <person name="Farman M.L."/>
            <person name="Jaromczyk J.W."/>
            <person name="Roe B.A."/>
            <person name="O'Sullivan D.M."/>
            <person name="Scott B."/>
            <person name="Tudzynski P."/>
            <person name="An Z."/>
            <person name="Arnaoudova E.G."/>
            <person name="Bullock C.T."/>
            <person name="Charlton N.D."/>
            <person name="Chen L."/>
            <person name="Cox M."/>
            <person name="Dinkins R.D."/>
            <person name="Florea S."/>
            <person name="Glenn A.E."/>
            <person name="Gordon A."/>
            <person name="Gueldener U."/>
            <person name="Harris D.R."/>
            <person name="Hollin W."/>
            <person name="Jaromczyk J."/>
            <person name="Johnson R.D."/>
            <person name="Khan A.K."/>
            <person name="Leistner E."/>
            <person name="Leuchtmann A."/>
            <person name="Li C."/>
            <person name="Liu J."/>
            <person name="Liu J."/>
            <person name="Liu M."/>
            <person name="Mace W."/>
            <person name="Machado C."/>
            <person name="Nagabhyru P."/>
            <person name="Pan J."/>
            <person name="Schmid J."/>
            <person name="Sugawara K."/>
            <person name="Steiner U."/>
            <person name="Takach J.E."/>
            <person name="Tanaka E."/>
            <person name="Webb J.S."/>
            <person name="Wilson E.V."/>
            <person name="Wiseman J.L."/>
            <person name="Yoshida R."/>
            <person name="Zeng Z."/>
        </authorList>
    </citation>
    <scope>NUCLEOTIDE SEQUENCE [GENOMIC DNA]</scope>
    <scope>IDENTIFICATION</scope>
    <scope>FUNCTION</scope>
    <source>
        <strain>RRC-1481</strain>
    </source>
</reference>
<reference key="2">
    <citation type="journal article" date="2018" name="Appl. Microbiol. Biotechnol.">
        <title>Inactivation of the indole-diterpene biosynthetic gene cluster of Claviceps paspali by Agrobacterium-mediated gene replacement.</title>
        <authorList>
            <person name="Kozak L."/>
            <person name="Szilagyi Z."/>
            <person name="Vago B."/>
            <person name="Kakuk A."/>
            <person name="Toth L."/>
            <person name="Molnar I."/>
            <person name="Pocsi I."/>
        </authorList>
    </citation>
    <scope>FUNCTION</scope>
    <scope>PATHWAY</scope>
</reference>
<reference key="3">
    <citation type="journal article" date="2020" name="Folia Microbiol. (Praha)">
        <title>Functional characterization of the idtF and idtP genes in the Claviceps paspali indole diterpene biosynthetic gene cluster.</title>
        <authorList>
            <person name="Kozak L."/>
            <person name="Szilagyi Z."/>
            <person name="Toth L."/>
            <person name="Pocsi I."/>
            <person name="Molnar I."/>
        </authorList>
    </citation>
    <scope>FUNCTION</scope>
</reference>